<accession>P64501</accession>
<accession>Q8XF43</accession>
<dbReference type="EMBL" id="AE006468">
    <property type="protein sequence ID" value="AAL20754.1"/>
    <property type="molecule type" value="Genomic_DNA"/>
</dbReference>
<dbReference type="RefSeq" id="NP_460795.1">
    <property type="nucleotide sequence ID" value="NC_003197.2"/>
</dbReference>
<dbReference type="RefSeq" id="WP_001000660.1">
    <property type="nucleotide sequence ID" value="NC_003197.2"/>
</dbReference>
<dbReference type="SMR" id="P64501"/>
<dbReference type="STRING" id="99287.STM1839"/>
<dbReference type="PaxDb" id="99287-STM1839"/>
<dbReference type="GeneID" id="1253358"/>
<dbReference type="KEGG" id="stm:STM1839"/>
<dbReference type="PATRIC" id="fig|99287.12.peg.1941"/>
<dbReference type="HOGENOM" id="CLU_165389_1_0_6"/>
<dbReference type="OMA" id="VLWFFVN"/>
<dbReference type="PhylomeDB" id="P64501"/>
<dbReference type="BioCyc" id="SENT99287:STM1839-MONOMER"/>
<dbReference type="Proteomes" id="UP000001014">
    <property type="component" value="Chromosome"/>
</dbReference>
<dbReference type="GO" id="GO:0005886">
    <property type="term" value="C:plasma membrane"/>
    <property type="evidence" value="ECO:0007669"/>
    <property type="project" value="UniProtKB-SubCell"/>
</dbReference>
<dbReference type="InterPro" id="IPR025594">
    <property type="entry name" value="YebO"/>
</dbReference>
<dbReference type="Pfam" id="PF13974">
    <property type="entry name" value="YebO"/>
    <property type="match status" value="1"/>
</dbReference>
<reference key="1">
    <citation type="journal article" date="2001" name="Nature">
        <title>Complete genome sequence of Salmonella enterica serovar Typhimurium LT2.</title>
        <authorList>
            <person name="McClelland M."/>
            <person name="Sanderson K.E."/>
            <person name="Spieth J."/>
            <person name="Clifton S.W."/>
            <person name="Latreille P."/>
            <person name="Courtney L."/>
            <person name="Porwollik S."/>
            <person name="Ali J."/>
            <person name="Dante M."/>
            <person name="Du F."/>
            <person name="Hou S."/>
            <person name="Layman D."/>
            <person name="Leonard S."/>
            <person name="Nguyen C."/>
            <person name="Scott K."/>
            <person name="Holmes A."/>
            <person name="Grewal N."/>
            <person name="Mulvaney E."/>
            <person name="Ryan E."/>
            <person name="Sun H."/>
            <person name="Florea L."/>
            <person name="Miller W."/>
            <person name="Stoneking T."/>
            <person name="Nhan M."/>
            <person name="Waterston R."/>
            <person name="Wilson R.K."/>
        </authorList>
    </citation>
    <scope>NUCLEOTIDE SEQUENCE [LARGE SCALE GENOMIC DNA]</scope>
    <source>
        <strain>LT2 / SGSC1412 / ATCC 700720</strain>
    </source>
</reference>
<name>YEBO_SALTY</name>
<keyword id="KW-1003">Cell membrane</keyword>
<keyword id="KW-0472">Membrane</keyword>
<keyword id="KW-1185">Reference proteome</keyword>
<keyword id="KW-0812">Transmembrane</keyword>
<keyword id="KW-1133">Transmembrane helix</keyword>
<organism>
    <name type="scientific">Salmonella typhimurium (strain LT2 / SGSC1412 / ATCC 700720)</name>
    <dbReference type="NCBI Taxonomy" id="99287"/>
    <lineage>
        <taxon>Bacteria</taxon>
        <taxon>Pseudomonadati</taxon>
        <taxon>Pseudomonadota</taxon>
        <taxon>Gammaproteobacteria</taxon>
        <taxon>Enterobacterales</taxon>
        <taxon>Enterobacteriaceae</taxon>
        <taxon>Salmonella</taxon>
    </lineage>
</organism>
<evidence type="ECO:0000255" key="1"/>
<evidence type="ECO:0000256" key="2">
    <source>
        <dbReference type="SAM" id="MobiDB-lite"/>
    </source>
</evidence>
<evidence type="ECO:0000305" key="3"/>
<protein>
    <recommendedName>
        <fullName>Uncharacterized protein YebO</fullName>
    </recommendedName>
</protein>
<sequence>MNDVLNSGAFSLASLIVSMVVLVVGLALWFFVNRASSRANEQIELLEALLDQQKRQNALLRRLCEANEPEKEAEPATAASEPKEDEDIIRLVAER</sequence>
<comment type="subcellular location">
    <subcellularLocation>
        <location evidence="3">Cell membrane</location>
        <topology evidence="3">Single-pass membrane protein</topology>
    </subcellularLocation>
</comment>
<proteinExistence type="predicted"/>
<feature type="chain" id="PRO_0000169049" description="Uncharacterized protein YebO">
    <location>
        <begin position="1"/>
        <end position="95"/>
    </location>
</feature>
<feature type="transmembrane region" description="Helical" evidence="1">
    <location>
        <begin position="12"/>
        <end position="32"/>
    </location>
</feature>
<feature type="region of interest" description="Disordered" evidence="2">
    <location>
        <begin position="66"/>
        <end position="87"/>
    </location>
</feature>
<gene>
    <name type="primary">yebO</name>
    <name type="ordered locus">STM1839</name>
</gene>